<organism>
    <name type="scientific">Xenopus laevis</name>
    <name type="common">African clawed frog</name>
    <dbReference type="NCBI Taxonomy" id="8355"/>
    <lineage>
        <taxon>Eukaryota</taxon>
        <taxon>Metazoa</taxon>
        <taxon>Chordata</taxon>
        <taxon>Craniata</taxon>
        <taxon>Vertebrata</taxon>
        <taxon>Euteleostomi</taxon>
        <taxon>Amphibia</taxon>
        <taxon>Batrachia</taxon>
        <taxon>Anura</taxon>
        <taxon>Pipoidea</taxon>
        <taxon>Pipidae</taxon>
        <taxon>Xenopodinae</taxon>
        <taxon>Xenopus</taxon>
        <taxon>Xenopus</taxon>
    </lineage>
</organism>
<accession>Q6PAY6</accession>
<protein>
    <recommendedName>
        <fullName evidence="1">Hydroxyproline dehydrogenase</fullName>
        <shortName evidence="1">HYPDH</shortName>
        <ecNumber evidence="1">1.5.5.3</ecNumber>
    </recommendedName>
    <alternativeName>
        <fullName evidence="1">Probable proline dehydrogenase 2</fullName>
        <ecNumber evidence="1">1.5.5.2</ecNumber>
    </alternativeName>
    <alternativeName>
        <fullName>Probable proline oxidase 2</fullName>
    </alternativeName>
</protein>
<sequence length="466" mass="52329">MRLLGRYLRLGSPRLCSRVWPTLPPSCSPHSTAAAAQAQGALSFSDGGVFKLKSSWEVARGLLIFRMCSFPSLVKHSEKMLSVSRRLLGRRLFEWGMKGSVYGQFVAGETLPEIRVCVDRLRQLGIHPMLAVPIEEDLGQAKSGERWYEQNESIMLDCVDLSAAGGDRPMMQLKITALMSAELCKLLSVHLSHPSNGPQLCPRSIVSIMEGKESAFSFLSEGENSHLRNSVRRLSRIAKHATANRVRVLVDAEYTYMNPALSLVTMAMMSQCNQSEPWIWNTYQCYLKDSFSLLSLDLDTARSLGLCFGVKLVRGAYMDKERKLSKQKGYADPIQHDWEATNRSYQRSLDKMLDLIGQNGQRHNLIVASHNEESVLHAVTRMAELGIDKGSGSVSFGQLLGMCDHVSLTLGQAGYLVYKSLPYGSVDSVLPYLIRRAQENQSVLQGIRKERDLLRRELKRRLFNQR</sequence>
<dbReference type="EC" id="1.5.5.3" evidence="1"/>
<dbReference type="EC" id="1.5.5.2" evidence="1"/>
<dbReference type="EMBL" id="BC059998">
    <property type="protein sequence ID" value="AAH59998.1"/>
    <property type="molecule type" value="mRNA"/>
</dbReference>
<dbReference type="RefSeq" id="NP_001083128.1">
    <property type="nucleotide sequence ID" value="NM_001089659.1"/>
</dbReference>
<dbReference type="SMR" id="Q6PAY6"/>
<dbReference type="DNASU" id="398760"/>
<dbReference type="GeneID" id="398760"/>
<dbReference type="KEGG" id="xla:398760"/>
<dbReference type="AGR" id="Xenbase:XB-GENE-5784821"/>
<dbReference type="CTD" id="398760"/>
<dbReference type="Xenbase" id="XB-GENE-5784821">
    <property type="gene designation" value="prodh2.L"/>
</dbReference>
<dbReference type="OrthoDB" id="5464at2759"/>
<dbReference type="UniPathway" id="UPA00261">
    <property type="reaction ID" value="UER00373"/>
</dbReference>
<dbReference type="Proteomes" id="UP000186698">
    <property type="component" value="Chromosome 9_10L"/>
</dbReference>
<dbReference type="Bgee" id="398760">
    <property type="expression patterns" value="Expressed in pancreas and 7 other cell types or tissues"/>
</dbReference>
<dbReference type="GO" id="GO:0005739">
    <property type="term" value="C:mitochondrion"/>
    <property type="evidence" value="ECO:0000318"/>
    <property type="project" value="GO_Central"/>
</dbReference>
<dbReference type="GO" id="GO:0071949">
    <property type="term" value="F:FAD binding"/>
    <property type="evidence" value="ECO:0000318"/>
    <property type="project" value="GO_Central"/>
</dbReference>
<dbReference type="GO" id="GO:0016645">
    <property type="term" value="F:oxidoreductase activity, acting on the CH-NH group of donors"/>
    <property type="evidence" value="ECO:0000250"/>
    <property type="project" value="UniProtKB"/>
</dbReference>
<dbReference type="GO" id="GO:0004657">
    <property type="term" value="F:proline dehydrogenase activity"/>
    <property type="evidence" value="ECO:0000318"/>
    <property type="project" value="GO_Central"/>
</dbReference>
<dbReference type="GO" id="GO:0010133">
    <property type="term" value="P:proline catabolic process to glutamate"/>
    <property type="evidence" value="ECO:0000318"/>
    <property type="project" value="GO_Central"/>
</dbReference>
<dbReference type="Gene3D" id="3.20.20.220">
    <property type="match status" value="1"/>
</dbReference>
<dbReference type="InterPro" id="IPR029041">
    <property type="entry name" value="FAD-linked_oxidoreductase-like"/>
</dbReference>
<dbReference type="InterPro" id="IPR002872">
    <property type="entry name" value="Proline_DH_dom"/>
</dbReference>
<dbReference type="InterPro" id="IPR015659">
    <property type="entry name" value="Proline_oxidase"/>
</dbReference>
<dbReference type="PANTHER" id="PTHR13914:SF29">
    <property type="entry name" value="HYDROXYPROLINE DEHYDROGENASE"/>
    <property type="match status" value="1"/>
</dbReference>
<dbReference type="PANTHER" id="PTHR13914">
    <property type="entry name" value="PROLINE OXIDASE"/>
    <property type="match status" value="1"/>
</dbReference>
<dbReference type="Pfam" id="PF01619">
    <property type="entry name" value="Pro_dh"/>
    <property type="match status" value="1"/>
</dbReference>
<dbReference type="SUPFAM" id="SSF51730">
    <property type="entry name" value="FAD-linked oxidoreductase"/>
    <property type="match status" value="1"/>
</dbReference>
<keyword id="KW-0274">FAD</keyword>
<keyword id="KW-0285">Flavoprotein</keyword>
<keyword id="KW-0560">Oxidoreductase</keyword>
<keyword id="KW-0642">Proline metabolism</keyword>
<keyword id="KW-1185">Reference proteome</keyword>
<evidence type="ECO:0000250" key="1">
    <source>
        <dbReference type="UniProtKB" id="Q9UF12"/>
    </source>
</evidence>
<evidence type="ECO:0000305" key="2"/>
<gene>
    <name type="primary">prodh2</name>
    <name evidence="1" type="synonym">hypdh</name>
</gene>
<proteinExistence type="evidence at transcript level"/>
<name>HYPDH_XENLA</name>
<reference key="1">
    <citation type="submission" date="2003-10" db="EMBL/GenBank/DDBJ databases">
        <authorList>
            <consortium name="NIH - Xenopus Gene Collection (XGC) project"/>
        </authorList>
    </citation>
    <scope>NUCLEOTIDE SEQUENCE [LARGE SCALE MRNA]</scope>
    <source>
        <tissue>Kidney</tissue>
    </source>
</reference>
<feature type="chain" id="PRO_0000308626" description="Hydroxyproline dehydrogenase">
    <location>
        <begin position="1"/>
        <end position="466"/>
    </location>
</feature>
<comment type="function">
    <text evidence="1">Dehydrogenase that converts trans-4-L-hydroxyproline to delta-1-pyrroline-3-hydroxy-5-carboxylate (Hyp) using a quinone as the terminal electron acceptor. Can also use proline as a substrate but with a very much lower efficiency. Does not react with other diastereomers of Hyp: trans-4-D-hydroxyproline and cis-4-L-hydroxyproline.</text>
</comment>
<comment type="catalytic activity">
    <reaction evidence="1">
        <text>trans-4-hydroxy-L-proline + a quinone = (3R,5S)-1-pyrroline-3-hydroxy-5-carboxylate + a quinol + H(+)</text>
        <dbReference type="Rhea" id="RHEA:52512"/>
        <dbReference type="ChEBI" id="CHEBI:15378"/>
        <dbReference type="ChEBI" id="CHEBI:24646"/>
        <dbReference type="ChEBI" id="CHEBI:58375"/>
        <dbReference type="ChEBI" id="CHEBI:62612"/>
        <dbReference type="ChEBI" id="CHEBI:132124"/>
        <dbReference type="EC" id="1.5.5.3"/>
    </reaction>
</comment>
<comment type="catalytic activity">
    <reaction evidence="1">
        <text>L-proline + a quinone = (S)-1-pyrroline-5-carboxylate + a quinol + H(+)</text>
        <dbReference type="Rhea" id="RHEA:23784"/>
        <dbReference type="ChEBI" id="CHEBI:15378"/>
        <dbReference type="ChEBI" id="CHEBI:17388"/>
        <dbReference type="ChEBI" id="CHEBI:24646"/>
        <dbReference type="ChEBI" id="CHEBI:60039"/>
        <dbReference type="ChEBI" id="CHEBI:132124"/>
        <dbReference type="EC" id="1.5.5.2"/>
    </reaction>
</comment>
<comment type="cofactor">
    <cofactor evidence="1">
        <name>FAD</name>
        <dbReference type="ChEBI" id="CHEBI:57692"/>
    </cofactor>
</comment>
<comment type="pathway">
    <text>Amino-acid degradation; L-proline degradation into L-glutamate; L-glutamate from L-proline: step 1/2.</text>
</comment>
<comment type="similarity">
    <text evidence="2">Belongs to the proline oxidase family.</text>
</comment>